<feature type="chain" id="PRO_0000095097" description="Glutamyl aminopeptidase">
    <location>
        <begin position="1"/>
        <end position="942"/>
    </location>
</feature>
<feature type="topological domain" description="Cytoplasmic" evidence="2">
    <location>
        <begin position="1"/>
        <end position="14"/>
    </location>
</feature>
<feature type="transmembrane region" description="Helical; Signal-anchor for type II membrane protein" evidence="2">
    <location>
        <begin position="15"/>
        <end position="35"/>
    </location>
</feature>
<feature type="topological domain" description="Extracellular" evidence="2">
    <location>
        <begin position="36"/>
        <end position="942"/>
    </location>
</feature>
<feature type="region of interest" description="Disordered" evidence="4">
    <location>
        <begin position="40"/>
        <end position="74"/>
    </location>
</feature>
<feature type="active site" description="Proton acceptor" evidence="3">
    <location>
        <position position="384"/>
    </location>
</feature>
<feature type="binding site" evidence="1">
    <location>
        <position position="213"/>
    </location>
    <ligand>
        <name>substrate</name>
    </ligand>
</feature>
<feature type="binding site" evidence="1">
    <location>
        <begin position="347"/>
        <end position="351"/>
    </location>
    <ligand>
        <name>substrate</name>
    </ligand>
</feature>
<feature type="binding site" evidence="3">
    <location>
        <position position="383"/>
    </location>
    <ligand>
        <name>Zn(2+)</name>
        <dbReference type="ChEBI" id="CHEBI:29105"/>
        <note>catalytic</note>
    </ligand>
</feature>
<feature type="binding site" evidence="3">
    <location>
        <position position="387"/>
    </location>
    <ligand>
        <name>Zn(2+)</name>
        <dbReference type="ChEBI" id="CHEBI:29105"/>
        <note>catalytic</note>
    </ligand>
</feature>
<feature type="binding site" evidence="3">
    <location>
        <position position="406"/>
    </location>
    <ligand>
        <name>Zn(2+)</name>
        <dbReference type="ChEBI" id="CHEBI:29105"/>
        <note>catalytic</note>
    </ligand>
</feature>
<feature type="binding site" evidence="1">
    <location>
        <position position="877"/>
    </location>
    <ligand>
        <name>substrate</name>
    </ligand>
</feature>
<feature type="site" description="Binds calcium which modulates its enzyme activity" evidence="1">
    <location>
        <position position="211"/>
    </location>
</feature>
<feature type="site" description="Transition state stabilizer" evidence="1">
    <location>
        <position position="469"/>
    </location>
</feature>
<feature type="glycosylation site" description="N-linked (GlcNAc...) asparagine" evidence="2">
    <location>
        <position position="110"/>
    </location>
</feature>
<feature type="glycosylation site" description="N-linked (GlcNAc...) asparagine" evidence="2">
    <location>
        <position position="114"/>
    </location>
</feature>
<feature type="glycosylation site" description="N-linked (GlcNAc...) asparagine" evidence="2">
    <location>
        <position position="187"/>
    </location>
</feature>
<feature type="glycosylation site" description="N-linked (GlcNAc...) asparagine" evidence="2">
    <location>
        <position position="314"/>
    </location>
</feature>
<feature type="glycosylation site" description="N-linked (GlcNAc...) asparagine" evidence="2">
    <location>
        <position position="367"/>
    </location>
</feature>
<feature type="glycosylation site" description="N-linked (GlcNAc...) asparagine" evidence="2">
    <location>
        <position position="557"/>
    </location>
</feature>
<feature type="glycosylation site" description="N-linked (GlcNAc...) asparagine" evidence="2">
    <location>
        <position position="579"/>
    </location>
</feature>
<feature type="glycosylation site" description="N-linked (GlcNAc...) asparagine" evidence="2">
    <location>
        <position position="587"/>
    </location>
</feature>
<feature type="glycosylation site" description="N-linked (GlcNAc...) asparagine" evidence="2">
    <location>
        <position position="597"/>
    </location>
</feature>
<feature type="glycosylation site" description="N-linked (GlcNAc...) asparagine" evidence="2">
    <location>
        <position position="632"/>
    </location>
</feature>
<feature type="glycosylation site" description="N-linked (GlcNAc...) asparagine" evidence="2">
    <location>
        <position position="668"/>
    </location>
</feature>
<feature type="glycosylation site" description="N-linked (GlcNAc...) asparagine" evidence="2">
    <location>
        <position position="753"/>
    </location>
</feature>
<feature type="glycosylation site" description="N-linked (GlcNAc...) asparagine" evidence="2">
    <location>
        <position position="786"/>
    </location>
</feature>
<feature type="glycosylation site" description="N-linked (GlcNAc...) asparagine" evidence="2">
    <location>
        <position position="791"/>
    </location>
</feature>
<comment type="function">
    <text evidence="1">Regulates central hypertension through its calcium-modulated preference to cleave N-terminal acidic residues from peptides such as angiotensin II.</text>
</comment>
<comment type="catalytic activity">
    <reaction evidence="1">
        <text>Release of N-terminal glutamate (and to a lesser extent aspartate) from a peptide.</text>
        <dbReference type="EC" id="3.4.11.7"/>
    </reaction>
</comment>
<comment type="cofactor">
    <cofactor evidence="1">
        <name>Zn(2+)</name>
        <dbReference type="ChEBI" id="CHEBI:29105"/>
    </cofactor>
    <text evidence="1">Binds 1 zinc ion per subunit.</text>
</comment>
<comment type="activity regulation">
    <text evidence="1">Substrate specificity is modulated by calcium which enhances the enzymatic activity for cleavage of acidic residues while reducing its activity with basic residues. Inhibited by aminopeptidase inhibitors amastatin and bestatin.</text>
</comment>
<comment type="subunit">
    <text evidence="5">Homodimer; disulfide-linked.</text>
</comment>
<comment type="subcellular location">
    <subcellularLocation>
        <location evidence="1">Cell membrane</location>
        <topology>Single-pass type II membrane protein</topology>
    </subcellularLocation>
</comment>
<comment type="similarity">
    <text evidence="6">Belongs to the peptidase M1 family.</text>
</comment>
<reference key="1">
    <citation type="journal article" date="1997" name="Biochemistry">
        <title>Proteolytic fragmentation reveals the oligomeric and domain structure of porcine aminopeptidase A.</title>
        <authorList>
            <person name="Hesp J.R."/>
            <person name="Hooper N.M."/>
        </authorList>
    </citation>
    <scope>NUCLEOTIDE SEQUENCE [MRNA]</scope>
    <scope>SUBUNIT</scope>
</reference>
<organism>
    <name type="scientific">Sus scrofa</name>
    <name type="common">Pig</name>
    <dbReference type="NCBI Taxonomy" id="9823"/>
    <lineage>
        <taxon>Eukaryota</taxon>
        <taxon>Metazoa</taxon>
        <taxon>Chordata</taxon>
        <taxon>Craniata</taxon>
        <taxon>Vertebrata</taxon>
        <taxon>Euteleostomi</taxon>
        <taxon>Mammalia</taxon>
        <taxon>Eutheria</taxon>
        <taxon>Laurasiatheria</taxon>
        <taxon>Artiodactyla</taxon>
        <taxon>Suina</taxon>
        <taxon>Suidae</taxon>
        <taxon>Sus</taxon>
    </lineage>
</organism>
<name>AMPE_PIG</name>
<gene>
    <name type="primary">ENPEP</name>
</gene>
<keyword id="KW-0031">Aminopeptidase</keyword>
<keyword id="KW-0106">Calcium</keyword>
<keyword id="KW-1003">Cell membrane</keyword>
<keyword id="KW-1015">Disulfide bond</keyword>
<keyword id="KW-0325">Glycoprotein</keyword>
<keyword id="KW-0378">Hydrolase</keyword>
<keyword id="KW-0472">Membrane</keyword>
<keyword id="KW-0479">Metal-binding</keyword>
<keyword id="KW-0482">Metalloprotease</keyword>
<keyword id="KW-0645">Protease</keyword>
<keyword id="KW-1185">Reference proteome</keyword>
<keyword id="KW-0735">Signal-anchor</keyword>
<keyword id="KW-0812">Transmembrane</keyword>
<keyword id="KW-1133">Transmembrane helix</keyword>
<keyword id="KW-0862">Zinc</keyword>
<sequence length="942" mass="108284">MSTDSKRYCIKTKHVAIICAAVVAVGLIVGLSVGLTRSCDSKDGGQGTTQSPSHLPPTSSPPQDQGVCPASEDESGNWRDFRLPDFINPVHYDLQVKPLLEQDTYTGTVNISINVTSPTQHLWLHLRETRITQLPVLWRPSGEQVQVRRCFEYKKQEYVVVEAEEELAPNSGEGLYHLTMEFAGWLNGSLVGFYRTTYVEKGQIKSIAATDHEPTDARKSFPCFDEPNKKATYTISIIHPKEYKALSNMPVEKEESVDDIWTQTTFQKSVPMSTYLVCFAVHQFDSVTRTSRSGKPLTIYVQPEQKHTAEYAANITKSVFDYFEDYFAMEYSLPKLDKIAIPDFGTGAMENWGLITYRETNLLYDPNESASSNQQRVAAVVAHELVHQWFGNIVTMEWWEDLWLNEGFASFFEFLGVDHAEKEWQMRDQILLEDVLPVQEDDSLISSHPIVVTVSTPAEITSVFDGISYSKGASILRMLEDWITPEKFQKGCQEYLKKFEFKNAKTSDFWEALEEASNLPVKEVMDTWTNQMGYPVLNVEDMRIISQKRFLLDPNANSSEPHSVFGYTWNIPVRWTNDNESTITIYNRSETGGITLNSSNPNGNAFLKINPDHIGFYRVNYEVSTWEWIATNLSLNHKDFSTADRASLIDDAFALARAQLLNYKEALNLTKYLKMEDEYLPWQRVISAVTYIISMFEDDKELYPMIEKYFRDQVKPIADSLGWNDNGDHLTKLLRASVLGFACKMGDSNALNNASHLFEQWLTGTVSLPVNLRLLVYRYGMQNSGNETSWNYTLKQYQETSLAQEKEKLLYGLASVKNVALLSRYLDLLKDPNVIKSQDVFTVIRYISYNSYGKTMAWNWIQLNWEYLVNRYTLNDRNLGRIVTIAEPFNTELQLWQMESFFKRYPEAGAGEKPREQVLETVKNNIEWLKQNRDTIRDWFFN</sequence>
<accession>Q95334</accession>
<dbReference type="EC" id="3.4.11.7"/>
<dbReference type="EMBL" id="U66371">
    <property type="protein sequence ID" value="AAB07141.1"/>
    <property type="molecule type" value="mRNA"/>
</dbReference>
<dbReference type="RefSeq" id="NP_999182.1">
    <property type="nucleotide sequence ID" value="NM_214017.1"/>
</dbReference>
<dbReference type="SMR" id="Q95334"/>
<dbReference type="FunCoup" id="Q95334">
    <property type="interactions" value="77"/>
</dbReference>
<dbReference type="STRING" id="9823.ENSSSCP00000064005"/>
<dbReference type="BindingDB" id="Q95334"/>
<dbReference type="ChEMBL" id="CHEMBL4868"/>
<dbReference type="MEROPS" id="M01.003"/>
<dbReference type="GlyCosmos" id="Q95334">
    <property type="glycosylation" value="14 sites, No reported glycans"/>
</dbReference>
<dbReference type="GlyGen" id="Q95334">
    <property type="glycosylation" value="14 sites"/>
</dbReference>
<dbReference type="PaxDb" id="9823-ENSSSCP00000009739"/>
<dbReference type="PeptideAtlas" id="Q95334"/>
<dbReference type="Ensembl" id="ENSSSCT00055031803.1">
    <property type="protein sequence ID" value="ENSSSCP00055025312.1"/>
    <property type="gene ID" value="ENSSSCG00055016116.1"/>
</dbReference>
<dbReference type="Ensembl" id="ENSSSCT00065093299.1">
    <property type="protein sequence ID" value="ENSSSCP00065040826.1"/>
    <property type="gene ID" value="ENSSSCG00065067948.1"/>
</dbReference>
<dbReference type="Ensembl" id="ENSSSCT00115020185">
    <property type="protein sequence ID" value="ENSSSCP00115019118"/>
    <property type="gene ID" value="ENSSSCG00115011686"/>
</dbReference>
<dbReference type="GeneID" id="397080"/>
<dbReference type="KEGG" id="ssc:397080"/>
<dbReference type="CTD" id="2028"/>
<dbReference type="eggNOG" id="KOG1046">
    <property type="taxonomic scope" value="Eukaryota"/>
</dbReference>
<dbReference type="InParanoid" id="Q95334"/>
<dbReference type="OrthoDB" id="510539at2759"/>
<dbReference type="Reactome" id="R-SSC-2022377">
    <property type="pathway name" value="Metabolism of Angiotensinogen to Angiotensins"/>
</dbReference>
<dbReference type="SABIO-RK" id="Q95334"/>
<dbReference type="Proteomes" id="UP000008227">
    <property type="component" value="Unplaced"/>
</dbReference>
<dbReference type="Proteomes" id="UP000314985">
    <property type="component" value="Unplaced"/>
</dbReference>
<dbReference type="Proteomes" id="UP000694570">
    <property type="component" value="Unplaced"/>
</dbReference>
<dbReference type="Proteomes" id="UP000694571">
    <property type="component" value="Unplaced"/>
</dbReference>
<dbReference type="Proteomes" id="UP000694720">
    <property type="component" value="Unplaced"/>
</dbReference>
<dbReference type="Proteomes" id="UP000694722">
    <property type="component" value="Unplaced"/>
</dbReference>
<dbReference type="Proteomes" id="UP000694723">
    <property type="component" value="Unplaced"/>
</dbReference>
<dbReference type="Proteomes" id="UP000694724">
    <property type="component" value="Unplaced"/>
</dbReference>
<dbReference type="Proteomes" id="UP000694725">
    <property type="component" value="Unplaced"/>
</dbReference>
<dbReference type="Proteomes" id="UP000694726">
    <property type="component" value="Unplaced"/>
</dbReference>
<dbReference type="Proteomes" id="UP000694727">
    <property type="component" value="Unplaced"/>
</dbReference>
<dbReference type="Proteomes" id="UP000694728">
    <property type="component" value="Unplaced"/>
</dbReference>
<dbReference type="GO" id="GO:0005737">
    <property type="term" value="C:cytoplasm"/>
    <property type="evidence" value="ECO:0000318"/>
    <property type="project" value="GO_Central"/>
</dbReference>
<dbReference type="GO" id="GO:0005615">
    <property type="term" value="C:extracellular space"/>
    <property type="evidence" value="ECO:0000318"/>
    <property type="project" value="GO_Central"/>
</dbReference>
<dbReference type="GO" id="GO:0005886">
    <property type="term" value="C:plasma membrane"/>
    <property type="evidence" value="ECO:0000250"/>
    <property type="project" value="UniProtKB"/>
</dbReference>
<dbReference type="GO" id="GO:0004177">
    <property type="term" value="F:aminopeptidase activity"/>
    <property type="evidence" value="ECO:0000250"/>
    <property type="project" value="UniProtKB"/>
</dbReference>
<dbReference type="GO" id="GO:0004230">
    <property type="term" value="F:glutamyl aminopeptidase activity"/>
    <property type="evidence" value="ECO:0007669"/>
    <property type="project" value="UniProtKB-EC"/>
</dbReference>
<dbReference type="GO" id="GO:0070006">
    <property type="term" value="F:metalloaminopeptidase activity"/>
    <property type="evidence" value="ECO:0000250"/>
    <property type="project" value="UniProtKB"/>
</dbReference>
<dbReference type="GO" id="GO:0042277">
    <property type="term" value="F:peptide binding"/>
    <property type="evidence" value="ECO:0000318"/>
    <property type="project" value="GO_Central"/>
</dbReference>
<dbReference type="GO" id="GO:0008270">
    <property type="term" value="F:zinc ion binding"/>
    <property type="evidence" value="ECO:0000318"/>
    <property type="project" value="GO_Central"/>
</dbReference>
<dbReference type="GO" id="GO:0016477">
    <property type="term" value="P:cell migration"/>
    <property type="evidence" value="ECO:0000250"/>
    <property type="project" value="UniProtKB"/>
</dbReference>
<dbReference type="GO" id="GO:0008283">
    <property type="term" value="P:cell population proliferation"/>
    <property type="evidence" value="ECO:0000250"/>
    <property type="project" value="UniProtKB"/>
</dbReference>
<dbReference type="GO" id="GO:0043171">
    <property type="term" value="P:peptide catabolic process"/>
    <property type="evidence" value="ECO:0000318"/>
    <property type="project" value="GO_Central"/>
</dbReference>
<dbReference type="GO" id="GO:0006508">
    <property type="term" value="P:proteolysis"/>
    <property type="evidence" value="ECO:0000318"/>
    <property type="project" value="GO_Central"/>
</dbReference>
<dbReference type="GO" id="GO:0008217">
    <property type="term" value="P:regulation of blood pressure"/>
    <property type="evidence" value="ECO:0000318"/>
    <property type="project" value="GO_Central"/>
</dbReference>
<dbReference type="GO" id="GO:0003081">
    <property type="term" value="P:regulation of systemic arterial blood pressure by renin-angiotensin"/>
    <property type="evidence" value="ECO:0000250"/>
    <property type="project" value="UniProtKB"/>
</dbReference>
<dbReference type="CDD" id="cd09601">
    <property type="entry name" value="M1_APN-Q_like"/>
    <property type="match status" value="1"/>
</dbReference>
<dbReference type="FunFam" id="1.25.50.20:FF:000001">
    <property type="entry name" value="Aminopeptidase"/>
    <property type="match status" value="1"/>
</dbReference>
<dbReference type="FunFam" id="2.60.40.1730:FF:000006">
    <property type="entry name" value="Aminopeptidase"/>
    <property type="match status" value="1"/>
</dbReference>
<dbReference type="FunFam" id="2.60.40.1910:FF:000003">
    <property type="entry name" value="Aminopeptidase"/>
    <property type="match status" value="1"/>
</dbReference>
<dbReference type="FunFam" id="1.10.390.10:FF:000016">
    <property type="entry name" value="Glutamyl aminopeptidase"/>
    <property type="match status" value="1"/>
</dbReference>
<dbReference type="Gene3D" id="1.25.50.20">
    <property type="match status" value="1"/>
</dbReference>
<dbReference type="Gene3D" id="2.60.40.1910">
    <property type="match status" value="1"/>
</dbReference>
<dbReference type="Gene3D" id="1.10.390.10">
    <property type="entry name" value="Neutral Protease Domain 2"/>
    <property type="match status" value="1"/>
</dbReference>
<dbReference type="Gene3D" id="2.60.40.1730">
    <property type="entry name" value="tricorn interacting facor f3 domain"/>
    <property type="match status" value="1"/>
</dbReference>
<dbReference type="InterPro" id="IPR045357">
    <property type="entry name" value="Aminopeptidase_N-like_N"/>
</dbReference>
<dbReference type="InterPro" id="IPR042097">
    <property type="entry name" value="Aminopeptidase_N-like_N_sf"/>
</dbReference>
<dbReference type="InterPro" id="IPR024571">
    <property type="entry name" value="ERAP1-like_C_dom"/>
</dbReference>
<dbReference type="InterPro" id="IPR034016">
    <property type="entry name" value="M1_APN-typ"/>
</dbReference>
<dbReference type="InterPro" id="IPR001930">
    <property type="entry name" value="Peptidase_M1"/>
</dbReference>
<dbReference type="InterPro" id="IPR050344">
    <property type="entry name" value="Peptidase_M1_aminopeptidases"/>
</dbReference>
<dbReference type="InterPro" id="IPR014782">
    <property type="entry name" value="Peptidase_M1_dom"/>
</dbReference>
<dbReference type="InterPro" id="IPR027268">
    <property type="entry name" value="Peptidase_M4/M1_CTD_sf"/>
</dbReference>
<dbReference type="PANTHER" id="PTHR11533:SF276">
    <property type="entry name" value="GLUTAMYL AMINOPEPTIDASE"/>
    <property type="match status" value="1"/>
</dbReference>
<dbReference type="PANTHER" id="PTHR11533">
    <property type="entry name" value="PROTEASE M1 ZINC METALLOPROTEASE"/>
    <property type="match status" value="1"/>
</dbReference>
<dbReference type="Pfam" id="PF11838">
    <property type="entry name" value="ERAP1_C"/>
    <property type="match status" value="1"/>
</dbReference>
<dbReference type="Pfam" id="PF01433">
    <property type="entry name" value="Peptidase_M1"/>
    <property type="match status" value="1"/>
</dbReference>
<dbReference type="Pfam" id="PF17900">
    <property type="entry name" value="Peptidase_M1_N"/>
    <property type="match status" value="1"/>
</dbReference>
<dbReference type="PRINTS" id="PR00756">
    <property type="entry name" value="ALADIPTASE"/>
</dbReference>
<dbReference type="SUPFAM" id="SSF63737">
    <property type="entry name" value="Leukotriene A4 hydrolase N-terminal domain"/>
    <property type="match status" value="1"/>
</dbReference>
<dbReference type="SUPFAM" id="SSF55486">
    <property type="entry name" value="Metalloproteases ('zincins'), catalytic domain"/>
    <property type="match status" value="1"/>
</dbReference>
<dbReference type="PROSITE" id="PS00142">
    <property type="entry name" value="ZINC_PROTEASE"/>
    <property type="match status" value="1"/>
</dbReference>
<proteinExistence type="evidence at protein level"/>
<evidence type="ECO:0000250" key="1">
    <source>
        <dbReference type="UniProtKB" id="Q07075"/>
    </source>
</evidence>
<evidence type="ECO:0000255" key="2"/>
<evidence type="ECO:0000255" key="3">
    <source>
        <dbReference type="PROSITE-ProRule" id="PRU10095"/>
    </source>
</evidence>
<evidence type="ECO:0000256" key="4">
    <source>
        <dbReference type="SAM" id="MobiDB-lite"/>
    </source>
</evidence>
<evidence type="ECO:0000269" key="5">
    <source>
    </source>
</evidence>
<evidence type="ECO:0000305" key="6"/>
<protein>
    <recommendedName>
        <fullName>Glutamyl aminopeptidase</fullName>
        <shortName>EAP</shortName>
        <ecNumber>3.4.11.7</ecNumber>
    </recommendedName>
    <alternativeName>
        <fullName>Aminopeptidase A</fullName>
        <shortName>AP-A</shortName>
    </alternativeName>
    <cdAntigenName>CD249</cdAntigenName>
</protein>